<dbReference type="EC" id="3.4.23.36" evidence="1"/>
<dbReference type="EMBL" id="CP000826">
    <property type="protein sequence ID" value="ABV39805.1"/>
    <property type="molecule type" value="Genomic_DNA"/>
</dbReference>
<dbReference type="SMR" id="A8G9L5"/>
<dbReference type="STRING" id="399741.Spro_0699"/>
<dbReference type="MEROPS" id="A08.001"/>
<dbReference type="KEGG" id="spe:Spro_0699"/>
<dbReference type="eggNOG" id="COG0597">
    <property type="taxonomic scope" value="Bacteria"/>
</dbReference>
<dbReference type="HOGENOM" id="CLU_083252_4_0_6"/>
<dbReference type="OrthoDB" id="9810259at2"/>
<dbReference type="UniPathway" id="UPA00665"/>
<dbReference type="GO" id="GO:0005886">
    <property type="term" value="C:plasma membrane"/>
    <property type="evidence" value="ECO:0007669"/>
    <property type="project" value="UniProtKB-SubCell"/>
</dbReference>
<dbReference type="GO" id="GO:0004190">
    <property type="term" value="F:aspartic-type endopeptidase activity"/>
    <property type="evidence" value="ECO:0007669"/>
    <property type="project" value="UniProtKB-UniRule"/>
</dbReference>
<dbReference type="GO" id="GO:0006508">
    <property type="term" value="P:proteolysis"/>
    <property type="evidence" value="ECO:0007669"/>
    <property type="project" value="UniProtKB-KW"/>
</dbReference>
<dbReference type="HAMAP" id="MF_00161">
    <property type="entry name" value="LspA"/>
    <property type="match status" value="1"/>
</dbReference>
<dbReference type="InterPro" id="IPR001872">
    <property type="entry name" value="Peptidase_A8"/>
</dbReference>
<dbReference type="NCBIfam" id="TIGR00077">
    <property type="entry name" value="lspA"/>
    <property type="match status" value="1"/>
</dbReference>
<dbReference type="PANTHER" id="PTHR33695">
    <property type="entry name" value="LIPOPROTEIN SIGNAL PEPTIDASE"/>
    <property type="match status" value="1"/>
</dbReference>
<dbReference type="PANTHER" id="PTHR33695:SF1">
    <property type="entry name" value="LIPOPROTEIN SIGNAL PEPTIDASE"/>
    <property type="match status" value="1"/>
</dbReference>
<dbReference type="Pfam" id="PF01252">
    <property type="entry name" value="Peptidase_A8"/>
    <property type="match status" value="1"/>
</dbReference>
<dbReference type="PRINTS" id="PR00781">
    <property type="entry name" value="LIPOSIGPTASE"/>
</dbReference>
<dbReference type="PROSITE" id="PS00855">
    <property type="entry name" value="SPASE_II"/>
    <property type="match status" value="1"/>
</dbReference>
<protein>
    <recommendedName>
        <fullName evidence="1">Lipoprotein signal peptidase</fullName>
        <ecNumber evidence="1">3.4.23.36</ecNumber>
    </recommendedName>
    <alternativeName>
        <fullName evidence="1">Prolipoprotein signal peptidase</fullName>
    </alternativeName>
    <alternativeName>
        <fullName evidence="1">Signal peptidase II</fullName>
        <shortName evidence="1">SPase II</shortName>
    </alternativeName>
</protein>
<name>LSPA_SERP5</name>
<evidence type="ECO:0000255" key="1">
    <source>
        <dbReference type="HAMAP-Rule" id="MF_00161"/>
    </source>
</evidence>
<gene>
    <name evidence="1" type="primary">lspA</name>
    <name type="ordered locus">Spro_0699</name>
</gene>
<sequence>MSKPICSTGLRWLWLVVVVLVLDFASKQWILGNFVLGQSQPLIPSFNLFYARNYGAAFSFLADHGGWQRWFFAGIAVAIVAVLLVMMYRSSAQQKLNNIAYAFIIGGALGNLFDRLWHGFVVDFIDFYVGNWHYPTFNLADSFICVGAAMIVLEGFLSPANKSAKSKGE</sequence>
<keyword id="KW-0064">Aspartyl protease</keyword>
<keyword id="KW-0997">Cell inner membrane</keyword>
<keyword id="KW-1003">Cell membrane</keyword>
<keyword id="KW-0378">Hydrolase</keyword>
<keyword id="KW-0472">Membrane</keyword>
<keyword id="KW-0645">Protease</keyword>
<keyword id="KW-0812">Transmembrane</keyword>
<keyword id="KW-1133">Transmembrane helix</keyword>
<reference key="1">
    <citation type="submission" date="2007-09" db="EMBL/GenBank/DDBJ databases">
        <title>Complete sequence of chromosome of Serratia proteamaculans 568.</title>
        <authorList>
            <consortium name="US DOE Joint Genome Institute"/>
            <person name="Copeland A."/>
            <person name="Lucas S."/>
            <person name="Lapidus A."/>
            <person name="Barry K."/>
            <person name="Glavina del Rio T."/>
            <person name="Dalin E."/>
            <person name="Tice H."/>
            <person name="Pitluck S."/>
            <person name="Chain P."/>
            <person name="Malfatti S."/>
            <person name="Shin M."/>
            <person name="Vergez L."/>
            <person name="Schmutz J."/>
            <person name="Larimer F."/>
            <person name="Land M."/>
            <person name="Hauser L."/>
            <person name="Kyrpides N."/>
            <person name="Kim E."/>
            <person name="Taghavi S."/>
            <person name="Newman L."/>
            <person name="Vangronsveld J."/>
            <person name="van der Lelie D."/>
            <person name="Richardson P."/>
        </authorList>
    </citation>
    <scope>NUCLEOTIDE SEQUENCE [LARGE SCALE GENOMIC DNA]</scope>
    <source>
        <strain>568</strain>
    </source>
</reference>
<accession>A8G9L5</accession>
<proteinExistence type="inferred from homology"/>
<feature type="chain" id="PRO_1000058239" description="Lipoprotein signal peptidase">
    <location>
        <begin position="1"/>
        <end position="169"/>
    </location>
</feature>
<feature type="transmembrane region" description="Helical" evidence="1">
    <location>
        <begin position="12"/>
        <end position="32"/>
    </location>
</feature>
<feature type="transmembrane region" description="Helical" evidence="1">
    <location>
        <begin position="70"/>
        <end position="90"/>
    </location>
</feature>
<feature type="transmembrane region" description="Helical" evidence="1">
    <location>
        <begin position="102"/>
        <end position="122"/>
    </location>
</feature>
<feature type="transmembrane region" description="Helical" evidence="1">
    <location>
        <begin position="137"/>
        <end position="157"/>
    </location>
</feature>
<feature type="active site" evidence="1">
    <location>
        <position position="123"/>
    </location>
</feature>
<feature type="active site" evidence="1">
    <location>
        <position position="141"/>
    </location>
</feature>
<organism>
    <name type="scientific">Serratia proteamaculans (strain 568)</name>
    <dbReference type="NCBI Taxonomy" id="399741"/>
    <lineage>
        <taxon>Bacteria</taxon>
        <taxon>Pseudomonadati</taxon>
        <taxon>Pseudomonadota</taxon>
        <taxon>Gammaproteobacteria</taxon>
        <taxon>Enterobacterales</taxon>
        <taxon>Yersiniaceae</taxon>
        <taxon>Serratia</taxon>
    </lineage>
</organism>
<comment type="function">
    <text evidence="1">This protein specifically catalyzes the removal of signal peptides from prolipoproteins.</text>
</comment>
<comment type="catalytic activity">
    <reaction evidence="1">
        <text>Release of signal peptides from bacterial membrane prolipoproteins. Hydrolyzes -Xaa-Yaa-Zaa-|-(S,diacylglyceryl)Cys-, in which Xaa is hydrophobic (preferably Leu), and Yaa (Ala or Ser) and Zaa (Gly or Ala) have small, neutral side chains.</text>
        <dbReference type="EC" id="3.4.23.36"/>
    </reaction>
</comment>
<comment type="pathway">
    <text evidence="1">Protein modification; lipoprotein biosynthesis (signal peptide cleavage).</text>
</comment>
<comment type="subcellular location">
    <subcellularLocation>
        <location evidence="1">Cell inner membrane</location>
        <topology evidence="1">Multi-pass membrane protein</topology>
    </subcellularLocation>
</comment>
<comment type="similarity">
    <text evidence="1">Belongs to the peptidase A8 family.</text>
</comment>